<protein>
    <recommendedName>
        <fullName evidence="1">Small ribosomal subunit protein bS20</fullName>
    </recommendedName>
    <alternativeName>
        <fullName evidence="3">30S ribosomal protein S20</fullName>
    </alternativeName>
</protein>
<dbReference type="EMBL" id="CP000891">
    <property type="protein sequence ID" value="ABX48328.1"/>
    <property type="molecule type" value="Genomic_DNA"/>
</dbReference>
<dbReference type="RefSeq" id="WP_006080633.1">
    <property type="nucleotide sequence ID" value="NC_009997.1"/>
</dbReference>
<dbReference type="SMR" id="A9L4U3"/>
<dbReference type="GeneID" id="11771433"/>
<dbReference type="KEGG" id="sbn:Sbal195_1152"/>
<dbReference type="HOGENOM" id="CLU_160655_4_0_6"/>
<dbReference type="Proteomes" id="UP000000770">
    <property type="component" value="Chromosome"/>
</dbReference>
<dbReference type="GO" id="GO:0005829">
    <property type="term" value="C:cytosol"/>
    <property type="evidence" value="ECO:0007669"/>
    <property type="project" value="TreeGrafter"/>
</dbReference>
<dbReference type="GO" id="GO:0015935">
    <property type="term" value="C:small ribosomal subunit"/>
    <property type="evidence" value="ECO:0007669"/>
    <property type="project" value="TreeGrafter"/>
</dbReference>
<dbReference type="GO" id="GO:0070181">
    <property type="term" value="F:small ribosomal subunit rRNA binding"/>
    <property type="evidence" value="ECO:0007669"/>
    <property type="project" value="TreeGrafter"/>
</dbReference>
<dbReference type="GO" id="GO:0003735">
    <property type="term" value="F:structural constituent of ribosome"/>
    <property type="evidence" value="ECO:0007669"/>
    <property type="project" value="InterPro"/>
</dbReference>
<dbReference type="GO" id="GO:0006412">
    <property type="term" value="P:translation"/>
    <property type="evidence" value="ECO:0007669"/>
    <property type="project" value="UniProtKB-UniRule"/>
</dbReference>
<dbReference type="FunFam" id="1.20.58.110:FF:000001">
    <property type="entry name" value="30S ribosomal protein S20"/>
    <property type="match status" value="1"/>
</dbReference>
<dbReference type="Gene3D" id="1.20.58.110">
    <property type="entry name" value="Ribosomal protein S20"/>
    <property type="match status" value="1"/>
</dbReference>
<dbReference type="HAMAP" id="MF_00500">
    <property type="entry name" value="Ribosomal_bS20"/>
    <property type="match status" value="1"/>
</dbReference>
<dbReference type="InterPro" id="IPR002583">
    <property type="entry name" value="Ribosomal_bS20"/>
</dbReference>
<dbReference type="InterPro" id="IPR036510">
    <property type="entry name" value="Ribosomal_bS20_sf"/>
</dbReference>
<dbReference type="NCBIfam" id="TIGR00029">
    <property type="entry name" value="S20"/>
    <property type="match status" value="1"/>
</dbReference>
<dbReference type="PANTHER" id="PTHR33398">
    <property type="entry name" value="30S RIBOSOMAL PROTEIN S20"/>
    <property type="match status" value="1"/>
</dbReference>
<dbReference type="PANTHER" id="PTHR33398:SF1">
    <property type="entry name" value="SMALL RIBOSOMAL SUBUNIT PROTEIN BS20C"/>
    <property type="match status" value="1"/>
</dbReference>
<dbReference type="Pfam" id="PF01649">
    <property type="entry name" value="Ribosomal_S20p"/>
    <property type="match status" value="1"/>
</dbReference>
<dbReference type="SUPFAM" id="SSF46992">
    <property type="entry name" value="Ribosomal protein S20"/>
    <property type="match status" value="1"/>
</dbReference>
<comment type="function">
    <text evidence="1">Binds directly to 16S ribosomal RNA.</text>
</comment>
<comment type="similarity">
    <text evidence="1">Belongs to the bacterial ribosomal protein bS20 family.</text>
</comment>
<gene>
    <name evidence="1" type="primary">rpsT</name>
    <name type="ordered locus">Sbal195_1152</name>
</gene>
<proteinExistence type="inferred from homology"/>
<feature type="chain" id="PRO_1000081448" description="Small ribosomal subunit protein bS20">
    <location>
        <begin position="1"/>
        <end position="88"/>
    </location>
</feature>
<feature type="region of interest" description="Disordered" evidence="2">
    <location>
        <begin position="1"/>
        <end position="27"/>
    </location>
</feature>
<accession>A9L4U3</accession>
<reference key="1">
    <citation type="submission" date="2007-11" db="EMBL/GenBank/DDBJ databases">
        <title>Complete sequence of chromosome of Shewanella baltica OS195.</title>
        <authorList>
            <consortium name="US DOE Joint Genome Institute"/>
            <person name="Copeland A."/>
            <person name="Lucas S."/>
            <person name="Lapidus A."/>
            <person name="Barry K."/>
            <person name="Glavina del Rio T."/>
            <person name="Dalin E."/>
            <person name="Tice H."/>
            <person name="Pitluck S."/>
            <person name="Chain P."/>
            <person name="Malfatti S."/>
            <person name="Shin M."/>
            <person name="Vergez L."/>
            <person name="Schmutz J."/>
            <person name="Larimer F."/>
            <person name="Land M."/>
            <person name="Hauser L."/>
            <person name="Kyrpides N."/>
            <person name="Kim E."/>
            <person name="Brettar I."/>
            <person name="Rodrigues J."/>
            <person name="Konstantinidis K."/>
            <person name="Klappenbach J."/>
            <person name="Hofle M."/>
            <person name="Tiedje J."/>
            <person name="Richardson P."/>
        </authorList>
    </citation>
    <scope>NUCLEOTIDE SEQUENCE [LARGE SCALE GENOMIC DNA]</scope>
    <source>
        <strain>OS195</strain>
    </source>
</reference>
<evidence type="ECO:0000255" key="1">
    <source>
        <dbReference type="HAMAP-Rule" id="MF_00500"/>
    </source>
</evidence>
<evidence type="ECO:0000256" key="2">
    <source>
        <dbReference type="SAM" id="MobiDB-lite"/>
    </source>
</evidence>
<evidence type="ECO:0000305" key="3"/>
<sequence length="88" mass="9690">MANSKSAKKRALQSEKRRQHNASRRSMLRTYVKKVIAAIKAGDHKTAAEAFAVAQPIVDRMATKGLIHKNKAARQKARLNAKIKAIAA</sequence>
<keyword id="KW-0687">Ribonucleoprotein</keyword>
<keyword id="KW-0689">Ribosomal protein</keyword>
<keyword id="KW-0694">RNA-binding</keyword>
<keyword id="KW-0699">rRNA-binding</keyword>
<organism>
    <name type="scientific">Shewanella baltica (strain OS195)</name>
    <dbReference type="NCBI Taxonomy" id="399599"/>
    <lineage>
        <taxon>Bacteria</taxon>
        <taxon>Pseudomonadati</taxon>
        <taxon>Pseudomonadota</taxon>
        <taxon>Gammaproteobacteria</taxon>
        <taxon>Alteromonadales</taxon>
        <taxon>Shewanellaceae</taxon>
        <taxon>Shewanella</taxon>
    </lineage>
</organism>
<name>RS20_SHEB9</name>